<sequence length="43" mass="4662">METATLVAISISGLLVSFTGYALYTAFGQPSQQLRDPFEEHGD</sequence>
<dbReference type="EMBL" id="X55900">
    <property type="protein sequence ID" value="CAA39392.1"/>
    <property type="molecule type" value="Genomic_DNA"/>
</dbReference>
<dbReference type="EMBL" id="EU262887">
    <property type="protein sequence ID" value="ABW98732.1"/>
    <property type="molecule type" value="Genomic_DNA"/>
</dbReference>
<dbReference type="PIR" id="S12130">
    <property type="entry name" value="S12130"/>
</dbReference>
<dbReference type="RefSeq" id="YP_001687165.1">
    <property type="nucleotide sequence ID" value="NC_010358.2"/>
</dbReference>
<dbReference type="SMR" id="P68858"/>
<dbReference type="GeneID" id="5951834"/>
<dbReference type="GO" id="GO:0009535">
    <property type="term" value="C:chloroplast thylakoid membrane"/>
    <property type="evidence" value="ECO:0007669"/>
    <property type="project" value="UniProtKB-SubCell"/>
</dbReference>
<dbReference type="GO" id="GO:0015979">
    <property type="term" value="P:photosynthesis"/>
    <property type="evidence" value="ECO:0007669"/>
    <property type="project" value="InterPro"/>
</dbReference>
<dbReference type="HAMAP" id="MF_00293">
    <property type="entry name" value="PSII_PsbN"/>
    <property type="match status" value="1"/>
</dbReference>
<dbReference type="InterPro" id="IPR003398">
    <property type="entry name" value="PSII_PsbN"/>
</dbReference>
<dbReference type="PANTHER" id="PTHR35326">
    <property type="entry name" value="PROTEIN PSBN"/>
    <property type="match status" value="1"/>
</dbReference>
<dbReference type="PANTHER" id="PTHR35326:SF3">
    <property type="entry name" value="PROTEIN PSBN"/>
    <property type="match status" value="1"/>
</dbReference>
<dbReference type="Pfam" id="PF02468">
    <property type="entry name" value="PsbN"/>
    <property type="match status" value="1"/>
</dbReference>
<feature type="chain" id="PRO_0000207932" description="Protein PsbN">
    <location>
        <begin position="1"/>
        <end position="43"/>
    </location>
</feature>
<feature type="transmembrane region" description="Helical" evidence="1">
    <location>
        <begin position="5"/>
        <end position="27"/>
    </location>
</feature>
<accession>P68858</accession>
<accession>B0Z4Q4</accession>
<accession>P12171</accession>
<protein>
    <recommendedName>
        <fullName evidence="1">Protein PsbN</fullName>
    </recommendedName>
</protein>
<proteinExistence type="inferred from homology"/>
<evidence type="ECO:0000255" key="1">
    <source>
        <dbReference type="HAMAP-Rule" id="MF_00293"/>
    </source>
</evidence>
<geneLocation type="chloroplast"/>
<reference key="1">
    <citation type="journal article" date="1990" name="Nucleic Acids Res.">
        <title>Nucleotide sequences of psbB and psbH, the plastid encoded genes for CP47 and the 10 kDa phosphoprotein of photosystem II in Oenothera hookeri and argillicola.</title>
        <authorList>
            <person name="Offermann-Steinhard K."/>
            <person name="Herrmann R.G."/>
        </authorList>
    </citation>
    <scope>NUCLEOTIDE SEQUENCE [GENOMIC DNA]</scope>
</reference>
<reference key="2">
    <citation type="journal article" date="2008" name="Nucleic Acids Res.">
        <title>The complete nucleotide sequences of the five genetically distinct plastid genomes of Oenothera, subsection Oenothera: I. Sequence evaluation and plastome evolution.</title>
        <authorList>
            <person name="Greiner S."/>
            <person name="Wang X."/>
            <person name="Rauwolf U."/>
            <person name="Silber M.V."/>
            <person name="Mayer K."/>
            <person name="Meurer J."/>
            <person name="Haberer G."/>
            <person name="Herrmann R.G."/>
        </authorList>
    </citation>
    <scope>NUCLEOTIDE SEQUENCE [LARGE SCALE GENOMIC DNA]</scope>
    <source>
        <strain>cv. Douthat 1</strain>
    </source>
</reference>
<name>PSBN_OENAR</name>
<gene>
    <name evidence="1" type="primary">psbN</name>
</gene>
<comment type="function">
    <text evidence="1">May play a role in photosystem I and II biogenesis.</text>
</comment>
<comment type="subcellular location">
    <subcellularLocation>
        <location evidence="1">Plastid</location>
        <location evidence="1">Chloroplast thylakoid membrane</location>
        <topology evidence="1">Single-pass membrane protein</topology>
    </subcellularLocation>
</comment>
<comment type="similarity">
    <text evidence="1">Belongs to the PsbN family.</text>
</comment>
<comment type="caution">
    <text evidence="1">Originally thought to be a component of PSII; based on experiments in Synechocystis, N.tabacum and barley, and its absence from PSII in T.elongatus and T.vulcanus, this is probably not true.</text>
</comment>
<organism>
    <name type="scientific">Oenothera argillicola</name>
    <name type="common">Appalachian evening primrose</name>
    <dbReference type="NCBI Taxonomy" id="3940"/>
    <lineage>
        <taxon>Eukaryota</taxon>
        <taxon>Viridiplantae</taxon>
        <taxon>Streptophyta</taxon>
        <taxon>Embryophyta</taxon>
        <taxon>Tracheophyta</taxon>
        <taxon>Spermatophyta</taxon>
        <taxon>Magnoliopsida</taxon>
        <taxon>eudicotyledons</taxon>
        <taxon>Gunneridae</taxon>
        <taxon>Pentapetalae</taxon>
        <taxon>rosids</taxon>
        <taxon>malvids</taxon>
        <taxon>Myrtales</taxon>
        <taxon>Onagraceae</taxon>
        <taxon>Onagroideae</taxon>
        <taxon>Onagreae</taxon>
        <taxon>Oenothera</taxon>
    </lineage>
</organism>
<keyword id="KW-0150">Chloroplast</keyword>
<keyword id="KW-0472">Membrane</keyword>
<keyword id="KW-0934">Plastid</keyword>
<keyword id="KW-0793">Thylakoid</keyword>
<keyword id="KW-0812">Transmembrane</keyword>
<keyword id="KW-1133">Transmembrane helix</keyword>